<organism>
    <name type="scientific">Streptococcus agalactiae serotype Ia (strain ATCC 27591 / A909 / CDC SS700)</name>
    <dbReference type="NCBI Taxonomy" id="205921"/>
    <lineage>
        <taxon>Bacteria</taxon>
        <taxon>Bacillati</taxon>
        <taxon>Bacillota</taxon>
        <taxon>Bacilli</taxon>
        <taxon>Lactobacillales</taxon>
        <taxon>Streptococcaceae</taxon>
        <taxon>Streptococcus</taxon>
    </lineage>
</organism>
<keyword id="KW-0143">Chaperone</keyword>
<keyword id="KW-0963">Cytoplasm</keyword>
<keyword id="KW-0235">DNA replication</keyword>
<keyword id="KW-0479">Metal-binding</keyword>
<keyword id="KW-0677">Repeat</keyword>
<keyword id="KW-0346">Stress response</keyword>
<keyword id="KW-0862">Zinc</keyword>
<keyword id="KW-0863">Zinc-finger</keyword>
<dbReference type="EMBL" id="CP000114">
    <property type="protein sequence ID" value="ABA44796.1"/>
    <property type="molecule type" value="Genomic_DNA"/>
</dbReference>
<dbReference type="RefSeq" id="WP_001066281.1">
    <property type="nucleotide sequence ID" value="NC_007432.1"/>
</dbReference>
<dbReference type="SMR" id="Q3K3T1"/>
<dbReference type="KEGG" id="sak:SAK_0148"/>
<dbReference type="HOGENOM" id="CLU_017633_0_0_9"/>
<dbReference type="GO" id="GO:0005737">
    <property type="term" value="C:cytoplasm"/>
    <property type="evidence" value="ECO:0007669"/>
    <property type="project" value="UniProtKB-SubCell"/>
</dbReference>
<dbReference type="GO" id="GO:0005524">
    <property type="term" value="F:ATP binding"/>
    <property type="evidence" value="ECO:0007669"/>
    <property type="project" value="InterPro"/>
</dbReference>
<dbReference type="GO" id="GO:0031072">
    <property type="term" value="F:heat shock protein binding"/>
    <property type="evidence" value="ECO:0007669"/>
    <property type="project" value="InterPro"/>
</dbReference>
<dbReference type="GO" id="GO:0051082">
    <property type="term" value="F:unfolded protein binding"/>
    <property type="evidence" value="ECO:0007669"/>
    <property type="project" value="UniProtKB-UniRule"/>
</dbReference>
<dbReference type="GO" id="GO:0008270">
    <property type="term" value="F:zinc ion binding"/>
    <property type="evidence" value="ECO:0007669"/>
    <property type="project" value="UniProtKB-UniRule"/>
</dbReference>
<dbReference type="GO" id="GO:0051085">
    <property type="term" value="P:chaperone cofactor-dependent protein refolding"/>
    <property type="evidence" value="ECO:0007669"/>
    <property type="project" value="TreeGrafter"/>
</dbReference>
<dbReference type="GO" id="GO:0006260">
    <property type="term" value="P:DNA replication"/>
    <property type="evidence" value="ECO:0007669"/>
    <property type="project" value="UniProtKB-KW"/>
</dbReference>
<dbReference type="GO" id="GO:0042026">
    <property type="term" value="P:protein refolding"/>
    <property type="evidence" value="ECO:0007669"/>
    <property type="project" value="TreeGrafter"/>
</dbReference>
<dbReference type="GO" id="GO:0009408">
    <property type="term" value="P:response to heat"/>
    <property type="evidence" value="ECO:0007669"/>
    <property type="project" value="InterPro"/>
</dbReference>
<dbReference type="CDD" id="cd06257">
    <property type="entry name" value="DnaJ"/>
    <property type="match status" value="1"/>
</dbReference>
<dbReference type="CDD" id="cd10747">
    <property type="entry name" value="DnaJ_C"/>
    <property type="match status" value="1"/>
</dbReference>
<dbReference type="CDD" id="cd10719">
    <property type="entry name" value="DnaJ_zf"/>
    <property type="match status" value="1"/>
</dbReference>
<dbReference type="FunFam" id="1.10.287.110:FF:000031">
    <property type="entry name" value="Molecular chaperone DnaJ"/>
    <property type="match status" value="1"/>
</dbReference>
<dbReference type="FunFam" id="2.10.230.10:FF:000002">
    <property type="entry name" value="Molecular chaperone DnaJ"/>
    <property type="match status" value="1"/>
</dbReference>
<dbReference type="FunFam" id="2.60.260.20:FF:000004">
    <property type="entry name" value="Molecular chaperone DnaJ"/>
    <property type="match status" value="1"/>
</dbReference>
<dbReference type="Gene3D" id="1.10.287.110">
    <property type="entry name" value="DnaJ domain"/>
    <property type="match status" value="1"/>
</dbReference>
<dbReference type="Gene3D" id="2.10.230.10">
    <property type="entry name" value="Heat shock protein DnaJ, cysteine-rich domain"/>
    <property type="match status" value="1"/>
</dbReference>
<dbReference type="Gene3D" id="2.60.260.20">
    <property type="entry name" value="Urease metallochaperone UreE, N-terminal domain"/>
    <property type="match status" value="2"/>
</dbReference>
<dbReference type="HAMAP" id="MF_01152">
    <property type="entry name" value="DnaJ"/>
    <property type="match status" value="1"/>
</dbReference>
<dbReference type="InterPro" id="IPR012724">
    <property type="entry name" value="DnaJ"/>
</dbReference>
<dbReference type="InterPro" id="IPR002939">
    <property type="entry name" value="DnaJ_C"/>
</dbReference>
<dbReference type="InterPro" id="IPR001623">
    <property type="entry name" value="DnaJ_domain"/>
</dbReference>
<dbReference type="InterPro" id="IPR018253">
    <property type="entry name" value="DnaJ_domain_CS"/>
</dbReference>
<dbReference type="InterPro" id="IPR008971">
    <property type="entry name" value="HSP40/DnaJ_pept-bd"/>
</dbReference>
<dbReference type="InterPro" id="IPR001305">
    <property type="entry name" value="HSP_DnaJ_Cys-rich_dom"/>
</dbReference>
<dbReference type="InterPro" id="IPR036410">
    <property type="entry name" value="HSP_DnaJ_Cys-rich_dom_sf"/>
</dbReference>
<dbReference type="InterPro" id="IPR036869">
    <property type="entry name" value="J_dom_sf"/>
</dbReference>
<dbReference type="NCBIfam" id="TIGR02349">
    <property type="entry name" value="DnaJ_bact"/>
    <property type="match status" value="1"/>
</dbReference>
<dbReference type="NCBIfam" id="NF008035">
    <property type="entry name" value="PRK10767.1"/>
    <property type="match status" value="1"/>
</dbReference>
<dbReference type="NCBIfam" id="NF010869">
    <property type="entry name" value="PRK14276.1"/>
    <property type="match status" value="1"/>
</dbReference>
<dbReference type="PANTHER" id="PTHR43096:SF48">
    <property type="entry name" value="CHAPERONE PROTEIN DNAJ"/>
    <property type="match status" value="1"/>
</dbReference>
<dbReference type="PANTHER" id="PTHR43096">
    <property type="entry name" value="DNAJ HOMOLOG 1, MITOCHONDRIAL-RELATED"/>
    <property type="match status" value="1"/>
</dbReference>
<dbReference type="Pfam" id="PF00226">
    <property type="entry name" value="DnaJ"/>
    <property type="match status" value="1"/>
</dbReference>
<dbReference type="Pfam" id="PF01556">
    <property type="entry name" value="DnaJ_C"/>
    <property type="match status" value="1"/>
</dbReference>
<dbReference type="Pfam" id="PF00684">
    <property type="entry name" value="DnaJ_CXXCXGXG"/>
    <property type="match status" value="1"/>
</dbReference>
<dbReference type="PRINTS" id="PR00625">
    <property type="entry name" value="JDOMAIN"/>
</dbReference>
<dbReference type="SMART" id="SM00271">
    <property type="entry name" value="DnaJ"/>
    <property type="match status" value="1"/>
</dbReference>
<dbReference type="SUPFAM" id="SSF46565">
    <property type="entry name" value="Chaperone J-domain"/>
    <property type="match status" value="1"/>
</dbReference>
<dbReference type="SUPFAM" id="SSF57938">
    <property type="entry name" value="DnaJ/Hsp40 cysteine-rich domain"/>
    <property type="match status" value="1"/>
</dbReference>
<dbReference type="SUPFAM" id="SSF49493">
    <property type="entry name" value="HSP40/DnaJ peptide-binding domain"/>
    <property type="match status" value="2"/>
</dbReference>
<dbReference type="PROSITE" id="PS00636">
    <property type="entry name" value="DNAJ_1"/>
    <property type="match status" value="1"/>
</dbReference>
<dbReference type="PROSITE" id="PS50076">
    <property type="entry name" value="DNAJ_2"/>
    <property type="match status" value="1"/>
</dbReference>
<dbReference type="PROSITE" id="PS51188">
    <property type="entry name" value="ZF_CR"/>
    <property type="match status" value="1"/>
</dbReference>
<comment type="function">
    <text evidence="1">Participates actively in the response to hyperosmotic and heat shock by preventing the aggregation of stress-denatured proteins and by disaggregating proteins, also in an autonomous, DnaK-independent fashion. Unfolded proteins bind initially to DnaJ; upon interaction with the DnaJ-bound protein, DnaK hydrolyzes its bound ATP, resulting in the formation of a stable complex. GrpE releases ADP from DnaK; ATP binding to DnaK triggers the release of the substrate protein, thus completing the reaction cycle. Several rounds of ATP-dependent interactions between DnaJ, DnaK and GrpE are required for fully efficient folding. Also involved, together with DnaK and GrpE, in the DNA replication of plasmids through activation of initiation proteins.</text>
</comment>
<comment type="cofactor">
    <cofactor evidence="1">
        <name>Zn(2+)</name>
        <dbReference type="ChEBI" id="CHEBI:29105"/>
    </cofactor>
    <text evidence="1">Binds 2 Zn(2+) ions per monomer.</text>
</comment>
<comment type="subunit">
    <text evidence="1">Homodimer.</text>
</comment>
<comment type="subcellular location">
    <subcellularLocation>
        <location evidence="1">Cytoplasm</location>
    </subcellularLocation>
</comment>
<comment type="domain">
    <text evidence="1">The J domain is necessary and sufficient to stimulate DnaK ATPase activity. Zinc center 1 plays an important role in the autonomous, DnaK-independent chaperone activity of DnaJ. Zinc center 2 is essential for interaction with DnaK and for DnaJ activity.</text>
</comment>
<comment type="similarity">
    <text evidence="1">Belongs to the DnaJ family.</text>
</comment>
<evidence type="ECO:0000255" key="1">
    <source>
        <dbReference type="HAMAP-Rule" id="MF_01152"/>
    </source>
</evidence>
<feature type="chain" id="PRO_1000085317" description="Chaperone protein DnaJ">
    <location>
        <begin position="1"/>
        <end position="371"/>
    </location>
</feature>
<feature type="domain" description="J" evidence="1">
    <location>
        <begin position="5"/>
        <end position="69"/>
    </location>
</feature>
<feature type="repeat" description="CXXCXGXG motif">
    <location>
        <begin position="140"/>
        <end position="147"/>
    </location>
</feature>
<feature type="repeat" description="CXXCXGXG motif">
    <location>
        <begin position="157"/>
        <end position="164"/>
    </location>
</feature>
<feature type="repeat" description="CXXCXGXG motif">
    <location>
        <begin position="183"/>
        <end position="190"/>
    </location>
</feature>
<feature type="repeat" description="CXXCXGXG motif">
    <location>
        <begin position="197"/>
        <end position="204"/>
    </location>
</feature>
<feature type="zinc finger region" description="CR-type" evidence="1">
    <location>
        <begin position="127"/>
        <end position="209"/>
    </location>
</feature>
<feature type="binding site" evidence="1">
    <location>
        <position position="140"/>
    </location>
    <ligand>
        <name>Zn(2+)</name>
        <dbReference type="ChEBI" id="CHEBI:29105"/>
        <label>1</label>
    </ligand>
</feature>
<feature type="binding site" evidence="1">
    <location>
        <position position="143"/>
    </location>
    <ligand>
        <name>Zn(2+)</name>
        <dbReference type="ChEBI" id="CHEBI:29105"/>
        <label>1</label>
    </ligand>
</feature>
<feature type="binding site" evidence="1">
    <location>
        <position position="157"/>
    </location>
    <ligand>
        <name>Zn(2+)</name>
        <dbReference type="ChEBI" id="CHEBI:29105"/>
        <label>2</label>
    </ligand>
</feature>
<feature type="binding site" evidence="1">
    <location>
        <position position="160"/>
    </location>
    <ligand>
        <name>Zn(2+)</name>
        <dbReference type="ChEBI" id="CHEBI:29105"/>
        <label>2</label>
    </ligand>
</feature>
<feature type="binding site" evidence="1">
    <location>
        <position position="183"/>
    </location>
    <ligand>
        <name>Zn(2+)</name>
        <dbReference type="ChEBI" id="CHEBI:29105"/>
        <label>2</label>
    </ligand>
</feature>
<feature type="binding site" evidence="1">
    <location>
        <position position="186"/>
    </location>
    <ligand>
        <name>Zn(2+)</name>
        <dbReference type="ChEBI" id="CHEBI:29105"/>
        <label>2</label>
    </ligand>
</feature>
<feature type="binding site" evidence="1">
    <location>
        <position position="197"/>
    </location>
    <ligand>
        <name>Zn(2+)</name>
        <dbReference type="ChEBI" id="CHEBI:29105"/>
        <label>1</label>
    </ligand>
</feature>
<feature type="binding site" evidence="1">
    <location>
        <position position="200"/>
    </location>
    <ligand>
        <name>Zn(2+)</name>
        <dbReference type="ChEBI" id="CHEBI:29105"/>
        <label>1</label>
    </ligand>
</feature>
<protein>
    <recommendedName>
        <fullName evidence="1">Chaperone protein DnaJ</fullName>
    </recommendedName>
</protein>
<sequence>MNNTEFYDRLGVSKDASQDEIKKAYRRMSKKYHPDINKEAGAEEKYKEVQEAYETLSDTQKRAAYDQYGAAGANGGFGGFDGGGFGGFEDIFSSFFGGGGMRNPNAPRQGDDLQYRVNLSFEEAIFGAEKEVSYNRESSCHTCSGSGAKPGTSPVTCQKCHGSGVINVDTQTPLGTMRRQVTCDVCQGSGQEIKEKCPTCHGTGHEKKTHKVSVKIPAGVETGQQIRLTGQGEAGFNGGPYGDLFVIINVLPSQQFERNGSTIYYTLNISFVQAALGDTIDIPTVHGAVEMSIPAGTQTGKTFRLRGKGAPKLRGGGQGDQHVTVNIVTPTKLNDAQKEALHAFAEASGDKMVHPKKKGFFDKVKDALDVD</sequence>
<gene>
    <name evidence="1" type="primary">dnaJ</name>
    <name type="ordered locus">SAK_0148</name>
</gene>
<name>DNAJ_STRA1</name>
<proteinExistence type="inferred from homology"/>
<accession>Q3K3T1</accession>
<reference key="1">
    <citation type="journal article" date="2005" name="Proc. Natl. Acad. Sci. U.S.A.">
        <title>Genome analysis of multiple pathogenic isolates of Streptococcus agalactiae: implications for the microbial 'pan-genome'.</title>
        <authorList>
            <person name="Tettelin H."/>
            <person name="Masignani V."/>
            <person name="Cieslewicz M.J."/>
            <person name="Donati C."/>
            <person name="Medini D."/>
            <person name="Ward N.L."/>
            <person name="Angiuoli S.V."/>
            <person name="Crabtree J."/>
            <person name="Jones A.L."/>
            <person name="Durkin A.S."/>
            <person name="DeBoy R.T."/>
            <person name="Davidsen T.M."/>
            <person name="Mora M."/>
            <person name="Scarselli M."/>
            <person name="Margarit y Ros I."/>
            <person name="Peterson J.D."/>
            <person name="Hauser C.R."/>
            <person name="Sundaram J.P."/>
            <person name="Nelson W.C."/>
            <person name="Madupu R."/>
            <person name="Brinkac L.M."/>
            <person name="Dodson R.J."/>
            <person name="Rosovitz M.J."/>
            <person name="Sullivan S.A."/>
            <person name="Daugherty S.C."/>
            <person name="Haft D.H."/>
            <person name="Selengut J."/>
            <person name="Gwinn M.L."/>
            <person name="Zhou L."/>
            <person name="Zafar N."/>
            <person name="Khouri H."/>
            <person name="Radune D."/>
            <person name="Dimitrov G."/>
            <person name="Watkins K."/>
            <person name="O'Connor K.J."/>
            <person name="Smith S."/>
            <person name="Utterback T.R."/>
            <person name="White O."/>
            <person name="Rubens C.E."/>
            <person name="Grandi G."/>
            <person name="Madoff L.C."/>
            <person name="Kasper D.L."/>
            <person name="Telford J.L."/>
            <person name="Wessels M.R."/>
            <person name="Rappuoli R."/>
            <person name="Fraser C.M."/>
        </authorList>
    </citation>
    <scope>NUCLEOTIDE SEQUENCE [LARGE SCALE GENOMIC DNA]</scope>
    <source>
        <strain>ATCC 27591 / A909 / CDC SS700</strain>
    </source>
</reference>